<name>YJDP_SHISS</name>
<organism>
    <name type="scientific">Shigella sonnei (strain Ss046)</name>
    <dbReference type="NCBI Taxonomy" id="300269"/>
    <lineage>
        <taxon>Bacteria</taxon>
        <taxon>Pseudomonadati</taxon>
        <taxon>Pseudomonadota</taxon>
        <taxon>Gammaproteobacteria</taxon>
        <taxon>Enterobacterales</taxon>
        <taxon>Enterobacteriaceae</taxon>
        <taxon>Shigella</taxon>
    </lineage>
</organism>
<proteinExistence type="inferred from homology"/>
<feature type="signal peptide" evidence="1">
    <location>
        <begin position="1"/>
        <end position="22"/>
    </location>
</feature>
<feature type="chain" id="PRO_0000228853" description="Uncharacterized protein YjdP">
    <location>
        <begin position="23"/>
        <end position="109"/>
    </location>
</feature>
<feature type="region of interest" description="Disordered" evidence="2">
    <location>
        <begin position="39"/>
        <end position="109"/>
    </location>
</feature>
<feature type="compositionally biased region" description="Basic and acidic residues" evidence="2">
    <location>
        <begin position="41"/>
        <end position="109"/>
    </location>
</feature>
<accession>Q3YUQ0</accession>
<sequence length="109" mass="13469">MKRFPLFLLFTLLTLSTVPAQADIIDDTIGNIQQAINDAYNPDRGRDYEDSRDDGWQREVSDDRRRQYDDRRRQFEDRRRQLDDRQRQLDQERRQLEDEERRMEDEYGR</sequence>
<keyword id="KW-1185">Reference proteome</keyword>
<keyword id="KW-0732">Signal</keyword>
<evidence type="ECO:0000255" key="1"/>
<evidence type="ECO:0000256" key="2">
    <source>
        <dbReference type="SAM" id="MobiDB-lite"/>
    </source>
</evidence>
<dbReference type="EMBL" id="CP000038">
    <property type="protein sequence ID" value="AAZ90762.1"/>
    <property type="molecule type" value="Genomic_DNA"/>
</dbReference>
<dbReference type="RefSeq" id="WP_000819746.1">
    <property type="nucleotide sequence ID" value="NC_007384.1"/>
</dbReference>
<dbReference type="SMR" id="Q3YUQ0"/>
<dbReference type="GeneID" id="93777743"/>
<dbReference type="KEGG" id="ssn:SSON_4267"/>
<dbReference type="HOGENOM" id="CLU_176118_0_0_6"/>
<dbReference type="Proteomes" id="UP000002529">
    <property type="component" value="Chromosome"/>
</dbReference>
<dbReference type="InterPro" id="IPR048164">
    <property type="entry name" value="YjdP-like"/>
</dbReference>
<dbReference type="NCBIfam" id="NF041443">
    <property type="entry name" value="DDRRRQL_YjdP"/>
    <property type="match status" value="1"/>
</dbReference>
<protein>
    <recommendedName>
        <fullName>Uncharacterized protein YjdP</fullName>
    </recommendedName>
</protein>
<reference key="1">
    <citation type="journal article" date="2005" name="Nucleic Acids Res.">
        <title>Genome dynamics and diversity of Shigella species, the etiologic agents of bacillary dysentery.</title>
        <authorList>
            <person name="Yang F."/>
            <person name="Yang J."/>
            <person name="Zhang X."/>
            <person name="Chen L."/>
            <person name="Jiang Y."/>
            <person name="Yan Y."/>
            <person name="Tang X."/>
            <person name="Wang J."/>
            <person name="Xiong Z."/>
            <person name="Dong J."/>
            <person name="Xue Y."/>
            <person name="Zhu Y."/>
            <person name="Xu X."/>
            <person name="Sun L."/>
            <person name="Chen S."/>
            <person name="Nie H."/>
            <person name="Peng J."/>
            <person name="Xu J."/>
            <person name="Wang Y."/>
            <person name="Yuan Z."/>
            <person name="Wen Y."/>
            <person name="Yao Z."/>
            <person name="Shen Y."/>
            <person name="Qiang B."/>
            <person name="Hou Y."/>
            <person name="Yu J."/>
            <person name="Jin Q."/>
        </authorList>
    </citation>
    <scope>NUCLEOTIDE SEQUENCE [LARGE SCALE GENOMIC DNA]</scope>
    <source>
        <strain>Ss046</strain>
    </source>
</reference>
<gene>
    <name type="primary">yjdP</name>
    <name type="ordered locus">SSON_4267</name>
</gene>